<gene>
    <name type="primary">alyref-a</name>
    <name type="synonym">thoc4-a</name>
</gene>
<dbReference type="EMBL" id="BC092013">
    <property type="protein sequence ID" value="AAH92013.1"/>
    <property type="molecule type" value="mRNA"/>
</dbReference>
<dbReference type="RefSeq" id="NP_001089314.1">
    <property type="nucleotide sequence ID" value="NM_001095845.1"/>
</dbReference>
<dbReference type="BMRB" id="Q58EA2"/>
<dbReference type="SMR" id="Q58EA2"/>
<dbReference type="BioGRID" id="592145">
    <property type="interactions" value="1"/>
</dbReference>
<dbReference type="IntAct" id="Q58EA2">
    <property type="interactions" value="1"/>
</dbReference>
<dbReference type="DNASU" id="734364"/>
<dbReference type="GeneID" id="734364"/>
<dbReference type="KEGG" id="xla:734364"/>
<dbReference type="AGR" id="Xenbase:XB-GENE-973560"/>
<dbReference type="CTD" id="734364"/>
<dbReference type="Xenbase" id="XB-GENE-973560">
    <property type="gene designation" value="alyref.L"/>
</dbReference>
<dbReference type="OMA" id="RNDYPRD"/>
<dbReference type="OrthoDB" id="1049195at2759"/>
<dbReference type="Proteomes" id="UP000186698">
    <property type="component" value="Chromosome 9_10L"/>
</dbReference>
<dbReference type="Bgee" id="734364">
    <property type="expression patterns" value="Expressed in gastrula and 19 other cell types or tissues"/>
</dbReference>
<dbReference type="GO" id="GO:0005737">
    <property type="term" value="C:cytoplasm"/>
    <property type="evidence" value="ECO:0000250"/>
    <property type="project" value="UniProtKB"/>
</dbReference>
<dbReference type="GO" id="GO:0016607">
    <property type="term" value="C:nuclear speck"/>
    <property type="evidence" value="ECO:0007669"/>
    <property type="project" value="UniProtKB-SubCell"/>
</dbReference>
<dbReference type="GO" id="GO:0005634">
    <property type="term" value="C:nucleus"/>
    <property type="evidence" value="ECO:0000250"/>
    <property type="project" value="UniProtKB"/>
</dbReference>
<dbReference type="GO" id="GO:0062153">
    <property type="term" value="F:C5-methylcytidine-containing RNA reader activity"/>
    <property type="evidence" value="ECO:0000250"/>
    <property type="project" value="UniProtKB"/>
</dbReference>
<dbReference type="GO" id="GO:0003729">
    <property type="term" value="F:mRNA binding"/>
    <property type="evidence" value="ECO:0000318"/>
    <property type="project" value="GO_Central"/>
</dbReference>
<dbReference type="GO" id="GO:0006406">
    <property type="term" value="P:mRNA export from nucleus"/>
    <property type="evidence" value="ECO:0000318"/>
    <property type="project" value="GO_Central"/>
</dbReference>
<dbReference type="GO" id="GO:0006397">
    <property type="term" value="P:mRNA processing"/>
    <property type="evidence" value="ECO:0007669"/>
    <property type="project" value="UniProtKB-KW"/>
</dbReference>
<dbReference type="GO" id="GO:0006405">
    <property type="term" value="P:RNA export from nucleus"/>
    <property type="evidence" value="ECO:0000250"/>
    <property type="project" value="UniProtKB"/>
</dbReference>
<dbReference type="GO" id="GO:0008380">
    <property type="term" value="P:RNA splicing"/>
    <property type="evidence" value="ECO:0007669"/>
    <property type="project" value="UniProtKB-KW"/>
</dbReference>
<dbReference type="CDD" id="cd12680">
    <property type="entry name" value="RRM_THOC4"/>
    <property type="match status" value="1"/>
</dbReference>
<dbReference type="FunFam" id="3.30.70.330:FF:000273">
    <property type="entry name" value="THO complex subunit 4"/>
    <property type="match status" value="1"/>
</dbReference>
<dbReference type="Gene3D" id="3.30.70.330">
    <property type="match status" value="1"/>
</dbReference>
<dbReference type="InterPro" id="IPR051229">
    <property type="entry name" value="ALYREF_mRNA_export"/>
</dbReference>
<dbReference type="InterPro" id="IPR025715">
    <property type="entry name" value="FoP_C"/>
</dbReference>
<dbReference type="InterPro" id="IPR012677">
    <property type="entry name" value="Nucleotide-bd_a/b_plait_sf"/>
</dbReference>
<dbReference type="InterPro" id="IPR035979">
    <property type="entry name" value="RBD_domain_sf"/>
</dbReference>
<dbReference type="InterPro" id="IPR000504">
    <property type="entry name" value="RRM_dom"/>
</dbReference>
<dbReference type="PANTHER" id="PTHR19965">
    <property type="entry name" value="RNA AND EXPORT FACTOR BINDING PROTEIN"/>
    <property type="match status" value="1"/>
</dbReference>
<dbReference type="PANTHER" id="PTHR19965:SF82">
    <property type="entry name" value="THO COMPLEX SUBUNIT 4"/>
    <property type="match status" value="1"/>
</dbReference>
<dbReference type="Pfam" id="PF13865">
    <property type="entry name" value="FoP_duplication"/>
    <property type="match status" value="1"/>
</dbReference>
<dbReference type="Pfam" id="PF00076">
    <property type="entry name" value="RRM_1"/>
    <property type="match status" value="1"/>
</dbReference>
<dbReference type="SMART" id="SM01218">
    <property type="entry name" value="FoP_duplication"/>
    <property type="match status" value="1"/>
</dbReference>
<dbReference type="SMART" id="SM00360">
    <property type="entry name" value="RRM"/>
    <property type="match status" value="1"/>
</dbReference>
<dbReference type="SUPFAM" id="SSF54928">
    <property type="entry name" value="RNA-binding domain, RBD"/>
    <property type="match status" value="1"/>
</dbReference>
<dbReference type="PROSITE" id="PS50102">
    <property type="entry name" value="RRM"/>
    <property type="match status" value="1"/>
</dbReference>
<name>THO4A_XENLA</name>
<sequence length="256" mass="27014">MGDKMDMSLDDIIKLNRSQRPSGRGRGGGRGARGGSARGGAGGRIGGGRGGGAPGVGGPMRSRPVLSRGGRNRPTPYSRPKQLPDKWQHDLFDSGFGAGAGMETGGKLLVSNLDFGVSDADIQELFAEFGTLKKAAVHYDRSGRSLGTADVHFERKADALKAMKQYNGVPLDGRPMNIQLVTSQIEAQRRPIQSQSRGGGVTRPRGGTLGFASGNRRGRGGNRGRGRGAGRNPKQQLSAEELDAQLDAYNARMDTS</sequence>
<reference key="1">
    <citation type="submission" date="2005-03" db="EMBL/GenBank/DDBJ databases">
        <authorList>
            <consortium name="NIH - Xenopus Gene Collection (XGC) project"/>
        </authorList>
    </citation>
    <scope>NUCLEOTIDE SEQUENCE [LARGE SCALE MRNA]</scope>
    <source>
        <tissue>Egg</tissue>
    </source>
</reference>
<keyword id="KW-0143">Chaperone</keyword>
<keyword id="KW-0963">Cytoplasm</keyword>
<keyword id="KW-0507">mRNA processing</keyword>
<keyword id="KW-0508">mRNA splicing</keyword>
<keyword id="KW-0509">mRNA transport</keyword>
<keyword id="KW-0539">Nucleus</keyword>
<keyword id="KW-1185">Reference proteome</keyword>
<keyword id="KW-0694">RNA-binding</keyword>
<keyword id="KW-0813">Transport</keyword>
<comment type="function">
    <text evidence="1">Functions as an mRNA export adapter; component of the transcription/export (TREX) complex which is thought to couple mRNA transcription, processing and nuclear export, and specifically associates with spliced mRNA and not with unspliced pre-mRNA. TREX is recruited to spliced mRNAs by a transcription-independent mechanism, binds to mRNA upstream of the exon-junction complex (EJC) and is recruited in a splicing- and cap-dependent manner to a region near the 5' end of the mRNA where it functions in mRNA export to the cytoplasm via the TAP/NXF1 pathway. Involved in the nuclear export of intronless mRNA; proposed to be recruited to intronless mRNA by ATP-bound DDX39B. Plays a key role in mRNP recognition and mRNA packaging by bridging the mRNP-bound EJC and the TREX core complex. TREX recruitment occurs via an interaction between ALYREF/THOC4 and the cap-binding protein NCBP1. Required for TREX complex assembly and for linking DDX39B to the cap-binding complex (CBC). Binds mRNA which is thought to be transferred to the NXF1-NXT1 heterodimer for export (TAP/NXF1 pathway). In conjunction with THOC5 functions in NXF1-NXT1 mediated nuclear export of HSP70 mRNA; both proteins enhance the RNA binding activity of NXF1 and are required for NXF1 localization to the nuclear rim. Involved in mRNA export of C5-methylcytosine (m5C)-containing mRNAs: specifically recognizes and binds m5C mRNAs and mediates their nucleo-cytoplasmic shuttling. Acts as a chaperone and promotes the dimerization of transcription factors containing basic leucine zipper (bZIP) domains and thereby promotes transcriptional activation. Involved in transcription elongation and genome stability (By similarity).</text>
</comment>
<comment type="subunit">
    <text evidence="1">Component of the transcription/export (TREX) complex; TREX seems to have a dynamic structure involving ATP-dependent remodeling (By similarity).</text>
</comment>
<comment type="subcellular location">
    <subcellularLocation>
        <location evidence="1">Nucleus</location>
    </subcellularLocation>
    <subcellularLocation>
        <location evidence="1">Nucleus speckle</location>
    </subcellularLocation>
    <subcellularLocation>
        <location evidence="1">Cytoplasm</location>
    </subcellularLocation>
    <text evidence="1">Travels to the cytoplasm as part of the exon junction complex (EJC) bound to mRNA.</text>
</comment>
<comment type="similarity">
    <text evidence="4">Belongs to the ALYREF family.</text>
</comment>
<feature type="chain" id="PRO_0000378580" description="THO complex subunit 4-A">
    <location>
        <begin position="1"/>
        <end position="256"/>
    </location>
</feature>
<feature type="domain" description="RRM" evidence="2">
    <location>
        <begin position="106"/>
        <end position="183"/>
    </location>
</feature>
<feature type="region of interest" description="Disordered" evidence="3">
    <location>
        <begin position="1"/>
        <end position="86"/>
    </location>
</feature>
<feature type="region of interest" description="Disordered" evidence="3">
    <location>
        <begin position="186"/>
        <end position="256"/>
    </location>
</feature>
<feature type="compositionally biased region" description="Basic and acidic residues" evidence="3">
    <location>
        <begin position="1"/>
        <end position="14"/>
    </location>
</feature>
<feature type="compositionally biased region" description="Gly residues" evidence="3">
    <location>
        <begin position="24"/>
        <end position="58"/>
    </location>
</feature>
<feature type="compositionally biased region" description="Polar residues" evidence="3">
    <location>
        <begin position="186"/>
        <end position="196"/>
    </location>
</feature>
<feature type="compositionally biased region" description="Basic residues" evidence="3">
    <location>
        <begin position="216"/>
        <end position="228"/>
    </location>
</feature>
<organism>
    <name type="scientific">Xenopus laevis</name>
    <name type="common">African clawed frog</name>
    <dbReference type="NCBI Taxonomy" id="8355"/>
    <lineage>
        <taxon>Eukaryota</taxon>
        <taxon>Metazoa</taxon>
        <taxon>Chordata</taxon>
        <taxon>Craniata</taxon>
        <taxon>Vertebrata</taxon>
        <taxon>Euteleostomi</taxon>
        <taxon>Amphibia</taxon>
        <taxon>Batrachia</taxon>
        <taxon>Anura</taxon>
        <taxon>Pipoidea</taxon>
        <taxon>Pipidae</taxon>
        <taxon>Xenopodinae</taxon>
        <taxon>Xenopus</taxon>
        <taxon>Xenopus</taxon>
    </lineage>
</organism>
<evidence type="ECO:0000250" key="1">
    <source>
        <dbReference type="UniProtKB" id="Q86V81"/>
    </source>
</evidence>
<evidence type="ECO:0000255" key="2">
    <source>
        <dbReference type="PROSITE-ProRule" id="PRU00176"/>
    </source>
</evidence>
<evidence type="ECO:0000256" key="3">
    <source>
        <dbReference type="SAM" id="MobiDB-lite"/>
    </source>
</evidence>
<evidence type="ECO:0000305" key="4"/>
<proteinExistence type="evidence at transcript level"/>
<protein>
    <recommendedName>
        <fullName>THO complex subunit 4-A</fullName>
        <shortName>Tho4-A</shortName>
    </recommendedName>
    <alternativeName>
        <fullName>Aly/REF export factor-A</fullName>
    </alternativeName>
</protein>
<accession>Q58EA2</accession>